<reference key="1">
    <citation type="journal article" date="2006" name="Lancet">
        <title>Complete genome sequence of USA300, an epidemic clone of community-acquired meticillin-resistant Staphylococcus aureus.</title>
        <authorList>
            <person name="Diep B.A."/>
            <person name="Gill S.R."/>
            <person name="Chang R.F."/>
            <person name="Phan T.H."/>
            <person name="Chen J.H."/>
            <person name="Davidson M.G."/>
            <person name="Lin F."/>
            <person name="Lin J."/>
            <person name="Carleton H.A."/>
            <person name="Mongodin E.F."/>
            <person name="Sensabaugh G.F."/>
            <person name="Perdreau-Remington F."/>
        </authorList>
    </citation>
    <scope>NUCLEOTIDE SEQUENCE [LARGE SCALE GENOMIC DNA]</scope>
    <source>
        <strain>USA300</strain>
    </source>
</reference>
<evidence type="ECO:0000255" key="1">
    <source>
        <dbReference type="HAMAP-Rule" id="MF_00253"/>
    </source>
</evidence>
<dbReference type="EC" id="6.1.1.14" evidence="1"/>
<dbReference type="EMBL" id="CP000255">
    <property type="protein sequence ID" value="ABD22244.1"/>
    <property type="molecule type" value="Genomic_DNA"/>
</dbReference>
<dbReference type="RefSeq" id="WP_001030080.1">
    <property type="nucleotide sequence ID" value="NZ_CP027476.1"/>
</dbReference>
<dbReference type="SMR" id="Q2FGF8"/>
<dbReference type="KEGG" id="saa:SAUSA300_1525"/>
<dbReference type="HOGENOM" id="CLU_015515_2_1_9"/>
<dbReference type="OMA" id="MEMQYFV"/>
<dbReference type="Proteomes" id="UP000001939">
    <property type="component" value="Chromosome"/>
</dbReference>
<dbReference type="GO" id="GO:0005737">
    <property type="term" value="C:cytoplasm"/>
    <property type="evidence" value="ECO:0007669"/>
    <property type="project" value="UniProtKB-SubCell"/>
</dbReference>
<dbReference type="GO" id="GO:0005524">
    <property type="term" value="F:ATP binding"/>
    <property type="evidence" value="ECO:0007669"/>
    <property type="project" value="UniProtKB-UniRule"/>
</dbReference>
<dbReference type="GO" id="GO:0140096">
    <property type="term" value="F:catalytic activity, acting on a protein"/>
    <property type="evidence" value="ECO:0007669"/>
    <property type="project" value="UniProtKB-ARBA"/>
</dbReference>
<dbReference type="GO" id="GO:0004820">
    <property type="term" value="F:glycine-tRNA ligase activity"/>
    <property type="evidence" value="ECO:0000250"/>
    <property type="project" value="UniProtKB"/>
</dbReference>
<dbReference type="GO" id="GO:0046983">
    <property type="term" value="F:protein dimerization activity"/>
    <property type="evidence" value="ECO:0000250"/>
    <property type="project" value="UniProtKB"/>
</dbReference>
<dbReference type="GO" id="GO:0016740">
    <property type="term" value="F:transferase activity"/>
    <property type="evidence" value="ECO:0007669"/>
    <property type="project" value="UniProtKB-ARBA"/>
</dbReference>
<dbReference type="GO" id="GO:0006426">
    <property type="term" value="P:glycyl-tRNA aminoacylation"/>
    <property type="evidence" value="ECO:0007669"/>
    <property type="project" value="UniProtKB-UniRule"/>
</dbReference>
<dbReference type="CDD" id="cd00774">
    <property type="entry name" value="GlyRS-like_core"/>
    <property type="match status" value="1"/>
</dbReference>
<dbReference type="CDD" id="cd00858">
    <property type="entry name" value="GlyRS_anticodon"/>
    <property type="match status" value="1"/>
</dbReference>
<dbReference type="FunFam" id="3.40.50.800:FF:000002">
    <property type="entry name" value="Glycine--tRNA ligase"/>
    <property type="match status" value="1"/>
</dbReference>
<dbReference type="Gene3D" id="3.30.40.230">
    <property type="match status" value="1"/>
</dbReference>
<dbReference type="Gene3D" id="3.40.50.800">
    <property type="entry name" value="Anticodon-binding domain"/>
    <property type="match status" value="1"/>
</dbReference>
<dbReference type="Gene3D" id="3.30.930.10">
    <property type="entry name" value="Bira Bifunctional Protein, Domain 2"/>
    <property type="match status" value="1"/>
</dbReference>
<dbReference type="HAMAP" id="MF_00253_B">
    <property type="entry name" value="Gly_tRNA_synth_B"/>
    <property type="match status" value="1"/>
</dbReference>
<dbReference type="InterPro" id="IPR002314">
    <property type="entry name" value="aa-tRNA-synt_IIb"/>
</dbReference>
<dbReference type="InterPro" id="IPR006195">
    <property type="entry name" value="aa-tRNA-synth_II"/>
</dbReference>
<dbReference type="InterPro" id="IPR045864">
    <property type="entry name" value="aa-tRNA-synth_II/BPL/LPL"/>
</dbReference>
<dbReference type="InterPro" id="IPR004154">
    <property type="entry name" value="Anticodon-bd"/>
</dbReference>
<dbReference type="InterPro" id="IPR036621">
    <property type="entry name" value="Anticodon-bd_dom_sf"/>
</dbReference>
<dbReference type="InterPro" id="IPR027031">
    <property type="entry name" value="Gly-tRNA_synthase/POLG2"/>
</dbReference>
<dbReference type="InterPro" id="IPR022961">
    <property type="entry name" value="Gly_tRNA_ligase_bac"/>
</dbReference>
<dbReference type="InterPro" id="IPR033731">
    <property type="entry name" value="GlyRS-like_core"/>
</dbReference>
<dbReference type="InterPro" id="IPR002315">
    <property type="entry name" value="tRNA-synt_gly"/>
</dbReference>
<dbReference type="NCBIfam" id="TIGR00389">
    <property type="entry name" value="glyS_dimeric"/>
    <property type="match status" value="1"/>
</dbReference>
<dbReference type="NCBIfam" id="NF003211">
    <property type="entry name" value="PRK04173.1"/>
    <property type="match status" value="1"/>
</dbReference>
<dbReference type="PANTHER" id="PTHR10745:SF8">
    <property type="entry name" value="DNA POLYMERASE SUBUNIT GAMMA-2, MITOCHONDRIAL"/>
    <property type="match status" value="1"/>
</dbReference>
<dbReference type="PANTHER" id="PTHR10745">
    <property type="entry name" value="GLYCYL-TRNA SYNTHETASE/DNA POLYMERASE SUBUNIT GAMMA-2"/>
    <property type="match status" value="1"/>
</dbReference>
<dbReference type="Pfam" id="PF03129">
    <property type="entry name" value="HGTP_anticodon"/>
    <property type="match status" value="1"/>
</dbReference>
<dbReference type="Pfam" id="PF00587">
    <property type="entry name" value="tRNA-synt_2b"/>
    <property type="match status" value="1"/>
</dbReference>
<dbReference type="PRINTS" id="PR01043">
    <property type="entry name" value="TRNASYNTHGLY"/>
</dbReference>
<dbReference type="SUPFAM" id="SSF52954">
    <property type="entry name" value="Class II aaRS ABD-related"/>
    <property type="match status" value="1"/>
</dbReference>
<dbReference type="SUPFAM" id="SSF55681">
    <property type="entry name" value="Class II aaRS and biotin synthetases"/>
    <property type="match status" value="1"/>
</dbReference>
<dbReference type="PROSITE" id="PS50862">
    <property type="entry name" value="AA_TRNA_LIGASE_II"/>
    <property type="match status" value="1"/>
</dbReference>
<accession>Q2FGF8</accession>
<keyword id="KW-0030">Aminoacyl-tRNA synthetase</keyword>
<keyword id="KW-0067">ATP-binding</keyword>
<keyword id="KW-0963">Cytoplasm</keyword>
<keyword id="KW-0436">Ligase</keyword>
<keyword id="KW-0547">Nucleotide-binding</keyword>
<keyword id="KW-0648">Protein biosynthesis</keyword>
<proteinExistence type="inferred from homology"/>
<sequence length="463" mass="53620">MAKDMDTIVSLAKHRGFVFPGSDIYGGLSNTWDYGPLGVELKNNVKKAWWQKFITQSPFNVGIDAAILMNPKVWEASGHLNNFNDPMIDNKDSKIRYRADKLIEDYMQDVKGDENFIADGLSFEQMKKIIDDEGIVCPVSKTANWTEIRQFNLMFKTFQGVTEDSTNEIFLRPETAQGIFVNYKNVQRSMRKKLPFGIGQIGKSFRNEITPGNFIFRTREFEQMELEFFCKPGEEIEWQNYWKTFASDWLTSLNMSSENMRLRDHDEDELSHYSNATTDIEYKFPFGWGELWGIASRTDFDLRKHAEHSGEDFRYHDPETNEKYIPYCIEPSLGADRVTLAFLCDAYDEEGVEGSKDARTVLHFHPALAPYKAAILPLSKKLSGEAIKIFEQLSSKFSIDFDESQSIGKRYRRQDEIGTPYCVTFDFDSLEDNQVTVRDRDSMEQVRMPISELEAFLTEKTKF</sequence>
<comment type="function">
    <text evidence="1">Catalyzes the attachment of glycine to tRNA(Gly).</text>
</comment>
<comment type="catalytic activity">
    <reaction evidence="1">
        <text>tRNA(Gly) + glycine + ATP = glycyl-tRNA(Gly) + AMP + diphosphate</text>
        <dbReference type="Rhea" id="RHEA:16013"/>
        <dbReference type="Rhea" id="RHEA-COMP:9664"/>
        <dbReference type="Rhea" id="RHEA-COMP:9683"/>
        <dbReference type="ChEBI" id="CHEBI:30616"/>
        <dbReference type="ChEBI" id="CHEBI:33019"/>
        <dbReference type="ChEBI" id="CHEBI:57305"/>
        <dbReference type="ChEBI" id="CHEBI:78442"/>
        <dbReference type="ChEBI" id="CHEBI:78522"/>
        <dbReference type="ChEBI" id="CHEBI:456215"/>
        <dbReference type="EC" id="6.1.1.14"/>
    </reaction>
</comment>
<comment type="subunit">
    <text evidence="1">Homodimer.</text>
</comment>
<comment type="subcellular location">
    <subcellularLocation>
        <location evidence="1">Cytoplasm</location>
    </subcellularLocation>
</comment>
<comment type="similarity">
    <text evidence="1">Belongs to the class-II aminoacyl-tRNA synthetase family.</text>
</comment>
<protein>
    <recommendedName>
        <fullName evidence="1">Glycine--tRNA ligase</fullName>
        <ecNumber evidence="1">6.1.1.14</ecNumber>
    </recommendedName>
    <alternativeName>
        <fullName evidence="1">Glycyl-tRNA synthetase</fullName>
        <shortName evidence="1">GlyRS</shortName>
    </alternativeName>
</protein>
<organism>
    <name type="scientific">Staphylococcus aureus (strain USA300)</name>
    <dbReference type="NCBI Taxonomy" id="367830"/>
    <lineage>
        <taxon>Bacteria</taxon>
        <taxon>Bacillati</taxon>
        <taxon>Bacillota</taxon>
        <taxon>Bacilli</taxon>
        <taxon>Bacillales</taxon>
        <taxon>Staphylococcaceae</taxon>
        <taxon>Staphylococcus</taxon>
    </lineage>
</organism>
<name>SYG_STAA3</name>
<gene>
    <name evidence="1" type="primary">glyQS</name>
    <name type="ordered locus">SAUSA300_1525</name>
</gene>
<feature type="chain" id="PRO_1000047384" description="Glycine--tRNA ligase">
    <location>
        <begin position="1"/>
        <end position="463"/>
    </location>
</feature>
<feature type="binding site" evidence="1">
    <location>
        <position position="98"/>
    </location>
    <ligand>
        <name>substrate</name>
    </ligand>
</feature>
<feature type="binding site" evidence="1">
    <location>
        <position position="174"/>
    </location>
    <ligand>
        <name>substrate</name>
    </ligand>
</feature>
<feature type="binding site" evidence="1">
    <location>
        <begin position="206"/>
        <end position="208"/>
    </location>
    <ligand>
        <name>ATP</name>
        <dbReference type="ChEBI" id="CHEBI:30616"/>
    </ligand>
</feature>
<feature type="binding site" evidence="1">
    <location>
        <begin position="216"/>
        <end position="221"/>
    </location>
    <ligand>
        <name>ATP</name>
        <dbReference type="ChEBI" id="CHEBI:30616"/>
    </ligand>
</feature>
<feature type="binding site" evidence="1">
    <location>
        <begin position="221"/>
        <end position="225"/>
    </location>
    <ligand>
        <name>substrate</name>
    </ligand>
</feature>
<feature type="binding site" evidence="1">
    <location>
        <begin position="290"/>
        <end position="291"/>
    </location>
    <ligand>
        <name>ATP</name>
        <dbReference type="ChEBI" id="CHEBI:30616"/>
    </ligand>
</feature>
<feature type="binding site" evidence="1">
    <location>
        <begin position="330"/>
        <end position="334"/>
    </location>
    <ligand>
        <name>substrate</name>
    </ligand>
</feature>
<feature type="binding site" evidence="1">
    <location>
        <begin position="334"/>
        <end position="337"/>
    </location>
    <ligand>
        <name>ATP</name>
        <dbReference type="ChEBI" id="CHEBI:30616"/>
    </ligand>
</feature>